<feature type="chain" id="PRO_1000064021" description="2,3-bisphosphoglycerate-independent phosphoglycerate mutase">
    <location>
        <begin position="1"/>
        <end position="515"/>
    </location>
</feature>
<feature type="active site" description="Phosphoserine intermediate" evidence="1">
    <location>
        <position position="64"/>
    </location>
</feature>
<feature type="binding site" evidence="1">
    <location>
        <position position="14"/>
    </location>
    <ligand>
        <name>Mn(2+)</name>
        <dbReference type="ChEBI" id="CHEBI:29035"/>
        <label>2</label>
    </ligand>
</feature>
<feature type="binding site" evidence="1">
    <location>
        <position position="64"/>
    </location>
    <ligand>
        <name>Mn(2+)</name>
        <dbReference type="ChEBI" id="CHEBI:29035"/>
        <label>2</label>
    </ligand>
</feature>
<feature type="binding site" evidence="1">
    <location>
        <position position="125"/>
    </location>
    <ligand>
        <name>substrate</name>
    </ligand>
</feature>
<feature type="binding site" evidence="1">
    <location>
        <begin position="155"/>
        <end position="156"/>
    </location>
    <ligand>
        <name>substrate</name>
    </ligand>
</feature>
<feature type="binding site" evidence="1">
    <location>
        <position position="187"/>
    </location>
    <ligand>
        <name>substrate</name>
    </ligand>
</feature>
<feature type="binding site" evidence="1">
    <location>
        <position position="193"/>
    </location>
    <ligand>
        <name>substrate</name>
    </ligand>
</feature>
<feature type="binding site" evidence="1">
    <location>
        <begin position="263"/>
        <end position="266"/>
    </location>
    <ligand>
        <name>substrate</name>
    </ligand>
</feature>
<feature type="binding site" evidence="1">
    <location>
        <position position="337"/>
    </location>
    <ligand>
        <name>substrate</name>
    </ligand>
</feature>
<feature type="binding site" evidence="1">
    <location>
        <position position="404"/>
    </location>
    <ligand>
        <name>Mn(2+)</name>
        <dbReference type="ChEBI" id="CHEBI:29035"/>
        <label>1</label>
    </ligand>
</feature>
<feature type="binding site" evidence="1">
    <location>
        <position position="408"/>
    </location>
    <ligand>
        <name>Mn(2+)</name>
        <dbReference type="ChEBI" id="CHEBI:29035"/>
        <label>1</label>
    </ligand>
</feature>
<feature type="binding site" evidence="1">
    <location>
        <position position="445"/>
    </location>
    <ligand>
        <name>Mn(2+)</name>
        <dbReference type="ChEBI" id="CHEBI:29035"/>
        <label>2</label>
    </ligand>
</feature>
<feature type="binding site" evidence="1">
    <location>
        <position position="446"/>
    </location>
    <ligand>
        <name>Mn(2+)</name>
        <dbReference type="ChEBI" id="CHEBI:29035"/>
        <label>2</label>
    </ligand>
</feature>
<feature type="binding site" evidence="1">
    <location>
        <position position="464"/>
    </location>
    <ligand>
        <name>Mn(2+)</name>
        <dbReference type="ChEBI" id="CHEBI:29035"/>
        <label>1</label>
    </ligand>
</feature>
<comment type="function">
    <text evidence="1">Catalyzes the interconversion of 2-phosphoglycerate and 3-phosphoglycerate.</text>
</comment>
<comment type="catalytic activity">
    <reaction evidence="1">
        <text>(2R)-2-phosphoglycerate = (2R)-3-phosphoglycerate</text>
        <dbReference type="Rhea" id="RHEA:15901"/>
        <dbReference type="ChEBI" id="CHEBI:58272"/>
        <dbReference type="ChEBI" id="CHEBI:58289"/>
        <dbReference type="EC" id="5.4.2.12"/>
    </reaction>
</comment>
<comment type="cofactor">
    <cofactor evidence="1">
        <name>Mn(2+)</name>
        <dbReference type="ChEBI" id="CHEBI:29035"/>
    </cofactor>
    <text evidence="1">Binds 2 manganese ions per subunit.</text>
</comment>
<comment type="pathway">
    <text evidence="1">Carbohydrate degradation; glycolysis; pyruvate from D-glyceraldehyde 3-phosphate: step 3/5.</text>
</comment>
<comment type="subunit">
    <text evidence="1">Monomer.</text>
</comment>
<comment type="similarity">
    <text evidence="1">Belongs to the BPG-independent phosphoglycerate mutase family.</text>
</comment>
<sequence length="515" mass="56168">MSSTKKPLVLTILDGYGHREEQQDNAILNAKTPVMDVLWQQQPHTLIAASGLDVGLPDGQMGNSEVGHVNLGAGRIVYQDLTRLDKEIKEGDFFTNPTLTAAVDNAVKTGKAVHIMGLLSAGGVHSHEDHIMAMVELAAKRGATAIYLHAFLDGRDTPPRSAESSLKRFTAKFAELGNGRIASIIGRYYAMDRDNRWDRVQLAYDLLTQAKGEFTADNAVAGLQAAYARGENDEFVKPTVIQATGEADAAMNEGDTLIFMNFRADRARQITRTFVNAEFDGFKRDKVVNFGDFIMLTEYAADIKVACAYPPASLTNTFGEWLMKHDKTQLRISETEKYAHVTFFYNGGVEEPFKGEDRILINSPKVATYDLQPEMSSAELTEKLVSAIGSGKYDVIICNYPNGDMVGHTGDYDAAVKAVETLDNCIEQVVAAVKAADGQLLITADHGNAEQMRDPATGQAHTAHTSLPVPLIYVGNKAVKAVEGGKLSDIAPTMLSLMEMEIPQEMTGKPLFIVE</sequence>
<keyword id="KW-0324">Glycolysis</keyword>
<keyword id="KW-0413">Isomerase</keyword>
<keyword id="KW-0464">Manganese</keyword>
<keyword id="KW-0479">Metal-binding</keyword>
<organism>
    <name type="scientific">Yersinia pestis bv. Antiqua (strain Nepal516)</name>
    <dbReference type="NCBI Taxonomy" id="377628"/>
    <lineage>
        <taxon>Bacteria</taxon>
        <taxon>Pseudomonadati</taxon>
        <taxon>Pseudomonadota</taxon>
        <taxon>Gammaproteobacteria</taxon>
        <taxon>Enterobacterales</taxon>
        <taxon>Yersiniaceae</taxon>
        <taxon>Yersinia</taxon>
    </lineage>
</organism>
<name>GPMI_YERPN</name>
<reference key="1">
    <citation type="journal article" date="2006" name="J. Bacteriol.">
        <title>Complete genome sequence of Yersinia pestis strains Antiqua and Nepal516: evidence of gene reduction in an emerging pathogen.</title>
        <authorList>
            <person name="Chain P.S.G."/>
            <person name="Hu P."/>
            <person name="Malfatti S.A."/>
            <person name="Radnedge L."/>
            <person name="Larimer F."/>
            <person name="Vergez L.M."/>
            <person name="Worsham P."/>
            <person name="Chu M.C."/>
            <person name="Andersen G.L."/>
        </authorList>
    </citation>
    <scope>NUCLEOTIDE SEQUENCE [LARGE SCALE GENOMIC DNA]</scope>
    <source>
        <strain>Nepal516</strain>
    </source>
</reference>
<reference key="2">
    <citation type="submission" date="2009-04" db="EMBL/GenBank/DDBJ databases">
        <title>Yersinia pestis Nepal516A whole genome shotgun sequencing project.</title>
        <authorList>
            <person name="Plunkett G. III"/>
            <person name="Anderson B.D."/>
            <person name="Baumler D.J."/>
            <person name="Burland V."/>
            <person name="Cabot E.L."/>
            <person name="Glasner J.D."/>
            <person name="Mau B."/>
            <person name="Neeno-Eckwall E."/>
            <person name="Perna N.T."/>
            <person name="Munk A.C."/>
            <person name="Tapia R."/>
            <person name="Green L.D."/>
            <person name="Rogers Y.C."/>
            <person name="Detter J.C."/>
            <person name="Bruce D.C."/>
            <person name="Brettin T.S."/>
        </authorList>
    </citation>
    <scope>NUCLEOTIDE SEQUENCE [LARGE SCALE GENOMIC DNA]</scope>
    <source>
        <strain>Nepal516</strain>
    </source>
</reference>
<evidence type="ECO:0000255" key="1">
    <source>
        <dbReference type="HAMAP-Rule" id="MF_01038"/>
    </source>
</evidence>
<accession>Q1CD17</accession>
<accession>D1Q2E6</accession>
<dbReference type="EC" id="5.4.2.12" evidence="1"/>
<dbReference type="EMBL" id="CP000305">
    <property type="protein sequence ID" value="ABG20113.1"/>
    <property type="molecule type" value="Genomic_DNA"/>
</dbReference>
<dbReference type="EMBL" id="ACNQ01000019">
    <property type="protein sequence ID" value="EEO74699.1"/>
    <property type="molecule type" value="Genomic_DNA"/>
</dbReference>
<dbReference type="SMR" id="Q1CD17"/>
<dbReference type="KEGG" id="ypn:YPN_3786"/>
<dbReference type="HOGENOM" id="CLU_026099_2_0_6"/>
<dbReference type="UniPathway" id="UPA00109">
    <property type="reaction ID" value="UER00186"/>
</dbReference>
<dbReference type="Proteomes" id="UP000008936">
    <property type="component" value="Chromosome"/>
</dbReference>
<dbReference type="GO" id="GO:0005829">
    <property type="term" value="C:cytosol"/>
    <property type="evidence" value="ECO:0007669"/>
    <property type="project" value="TreeGrafter"/>
</dbReference>
<dbReference type="GO" id="GO:0030145">
    <property type="term" value="F:manganese ion binding"/>
    <property type="evidence" value="ECO:0007669"/>
    <property type="project" value="UniProtKB-UniRule"/>
</dbReference>
<dbReference type="GO" id="GO:0004619">
    <property type="term" value="F:phosphoglycerate mutase activity"/>
    <property type="evidence" value="ECO:0007669"/>
    <property type="project" value="UniProtKB-EC"/>
</dbReference>
<dbReference type="GO" id="GO:0006007">
    <property type="term" value="P:glucose catabolic process"/>
    <property type="evidence" value="ECO:0007669"/>
    <property type="project" value="InterPro"/>
</dbReference>
<dbReference type="GO" id="GO:0006096">
    <property type="term" value="P:glycolytic process"/>
    <property type="evidence" value="ECO:0007669"/>
    <property type="project" value="UniProtKB-UniRule"/>
</dbReference>
<dbReference type="CDD" id="cd16010">
    <property type="entry name" value="iPGM"/>
    <property type="match status" value="1"/>
</dbReference>
<dbReference type="FunFam" id="3.40.1450.10:FF:000001">
    <property type="entry name" value="2,3-bisphosphoglycerate-independent phosphoglycerate mutase"/>
    <property type="match status" value="1"/>
</dbReference>
<dbReference type="FunFam" id="3.40.720.10:FF:000001">
    <property type="entry name" value="2,3-bisphosphoglycerate-independent phosphoglycerate mutase"/>
    <property type="match status" value="1"/>
</dbReference>
<dbReference type="Gene3D" id="3.40.720.10">
    <property type="entry name" value="Alkaline Phosphatase, subunit A"/>
    <property type="match status" value="1"/>
</dbReference>
<dbReference type="Gene3D" id="3.40.1450.10">
    <property type="entry name" value="BPG-independent phosphoglycerate mutase, domain B"/>
    <property type="match status" value="1"/>
</dbReference>
<dbReference type="HAMAP" id="MF_01038">
    <property type="entry name" value="GpmI"/>
    <property type="match status" value="1"/>
</dbReference>
<dbReference type="InterPro" id="IPR017850">
    <property type="entry name" value="Alkaline_phosphatase_core_sf"/>
</dbReference>
<dbReference type="InterPro" id="IPR011258">
    <property type="entry name" value="BPG-indep_PGM_N"/>
</dbReference>
<dbReference type="InterPro" id="IPR006124">
    <property type="entry name" value="Metalloenzyme"/>
</dbReference>
<dbReference type="InterPro" id="IPR036646">
    <property type="entry name" value="PGAM_B_sf"/>
</dbReference>
<dbReference type="InterPro" id="IPR005995">
    <property type="entry name" value="Pgm_bpd_ind"/>
</dbReference>
<dbReference type="NCBIfam" id="TIGR01307">
    <property type="entry name" value="pgm_bpd_ind"/>
    <property type="match status" value="1"/>
</dbReference>
<dbReference type="NCBIfam" id="NF003897">
    <property type="entry name" value="PRK05434.1-5"/>
    <property type="match status" value="1"/>
</dbReference>
<dbReference type="PANTHER" id="PTHR31637">
    <property type="entry name" value="2,3-BISPHOSPHOGLYCERATE-INDEPENDENT PHOSPHOGLYCERATE MUTASE"/>
    <property type="match status" value="1"/>
</dbReference>
<dbReference type="PANTHER" id="PTHR31637:SF0">
    <property type="entry name" value="2,3-BISPHOSPHOGLYCERATE-INDEPENDENT PHOSPHOGLYCERATE MUTASE"/>
    <property type="match status" value="1"/>
</dbReference>
<dbReference type="Pfam" id="PF06415">
    <property type="entry name" value="iPGM_N"/>
    <property type="match status" value="1"/>
</dbReference>
<dbReference type="Pfam" id="PF01676">
    <property type="entry name" value="Metalloenzyme"/>
    <property type="match status" value="1"/>
</dbReference>
<dbReference type="PIRSF" id="PIRSF001492">
    <property type="entry name" value="IPGAM"/>
    <property type="match status" value="1"/>
</dbReference>
<dbReference type="SUPFAM" id="SSF64158">
    <property type="entry name" value="2,3-Bisphosphoglycerate-independent phosphoglycerate mutase, substrate-binding domain"/>
    <property type="match status" value="1"/>
</dbReference>
<dbReference type="SUPFAM" id="SSF53649">
    <property type="entry name" value="Alkaline phosphatase-like"/>
    <property type="match status" value="1"/>
</dbReference>
<protein>
    <recommendedName>
        <fullName evidence="1">2,3-bisphosphoglycerate-independent phosphoglycerate mutase</fullName>
        <shortName evidence="1">BPG-independent PGAM</shortName>
        <shortName evidence="1">Phosphoglyceromutase</shortName>
        <shortName evidence="1">iPGM</shortName>
        <ecNumber evidence="1">5.4.2.12</ecNumber>
    </recommendedName>
</protein>
<proteinExistence type="inferred from homology"/>
<gene>
    <name evidence="1" type="primary">gpmI</name>
    <name type="ordered locus">YPN_3786</name>
    <name type="ORF">YP516_4306</name>
</gene>